<gene>
    <name evidence="1" type="primary">panB</name>
    <name type="ordered locus">YPDSF_2955</name>
</gene>
<evidence type="ECO:0000255" key="1">
    <source>
        <dbReference type="HAMAP-Rule" id="MF_00156"/>
    </source>
</evidence>
<feature type="chain" id="PRO_0000297417" description="3-methyl-2-oxobutanoate hydroxymethyltransferase">
    <location>
        <begin position="1"/>
        <end position="265"/>
    </location>
</feature>
<feature type="active site" description="Proton acceptor" evidence="1">
    <location>
        <position position="181"/>
    </location>
</feature>
<feature type="binding site" evidence="1">
    <location>
        <begin position="45"/>
        <end position="46"/>
    </location>
    <ligand>
        <name>3-methyl-2-oxobutanoate</name>
        <dbReference type="ChEBI" id="CHEBI:11851"/>
    </ligand>
</feature>
<feature type="binding site" evidence="1">
    <location>
        <position position="45"/>
    </location>
    <ligand>
        <name>Mg(2+)</name>
        <dbReference type="ChEBI" id="CHEBI:18420"/>
    </ligand>
</feature>
<feature type="binding site" evidence="1">
    <location>
        <position position="84"/>
    </location>
    <ligand>
        <name>3-methyl-2-oxobutanoate</name>
        <dbReference type="ChEBI" id="CHEBI:11851"/>
    </ligand>
</feature>
<feature type="binding site" evidence="1">
    <location>
        <position position="84"/>
    </location>
    <ligand>
        <name>Mg(2+)</name>
        <dbReference type="ChEBI" id="CHEBI:18420"/>
    </ligand>
</feature>
<feature type="binding site" evidence="1">
    <location>
        <position position="112"/>
    </location>
    <ligand>
        <name>3-methyl-2-oxobutanoate</name>
        <dbReference type="ChEBI" id="CHEBI:11851"/>
    </ligand>
</feature>
<feature type="binding site" evidence="1">
    <location>
        <position position="114"/>
    </location>
    <ligand>
        <name>Mg(2+)</name>
        <dbReference type="ChEBI" id="CHEBI:18420"/>
    </ligand>
</feature>
<proteinExistence type="inferred from homology"/>
<comment type="function">
    <text evidence="1">Catalyzes the reversible reaction in which hydroxymethyl group from 5,10-methylenetetrahydrofolate is transferred onto alpha-ketoisovalerate to form ketopantoate.</text>
</comment>
<comment type="catalytic activity">
    <reaction evidence="1">
        <text>3-methyl-2-oxobutanoate + (6R)-5,10-methylene-5,6,7,8-tetrahydrofolate + H2O = 2-dehydropantoate + (6S)-5,6,7,8-tetrahydrofolate</text>
        <dbReference type="Rhea" id="RHEA:11824"/>
        <dbReference type="ChEBI" id="CHEBI:11561"/>
        <dbReference type="ChEBI" id="CHEBI:11851"/>
        <dbReference type="ChEBI" id="CHEBI:15377"/>
        <dbReference type="ChEBI" id="CHEBI:15636"/>
        <dbReference type="ChEBI" id="CHEBI:57453"/>
        <dbReference type="EC" id="2.1.2.11"/>
    </reaction>
</comment>
<comment type="cofactor">
    <cofactor evidence="1">
        <name>Mg(2+)</name>
        <dbReference type="ChEBI" id="CHEBI:18420"/>
    </cofactor>
    <text evidence="1">Binds 1 Mg(2+) ion per subunit.</text>
</comment>
<comment type="pathway">
    <text evidence="1">Cofactor biosynthesis; (R)-pantothenate biosynthesis; (R)-pantoate from 3-methyl-2-oxobutanoate: step 1/2.</text>
</comment>
<comment type="subunit">
    <text evidence="1">Homodecamer; pentamer of dimers.</text>
</comment>
<comment type="subcellular location">
    <subcellularLocation>
        <location evidence="1">Cytoplasm</location>
    </subcellularLocation>
</comment>
<comment type="similarity">
    <text evidence="1">Belongs to the PanB family.</text>
</comment>
<keyword id="KW-0963">Cytoplasm</keyword>
<keyword id="KW-0460">Magnesium</keyword>
<keyword id="KW-0479">Metal-binding</keyword>
<keyword id="KW-0566">Pantothenate biosynthesis</keyword>
<keyword id="KW-0808">Transferase</keyword>
<name>PANB_YERPP</name>
<dbReference type="EC" id="2.1.2.11" evidence="1"/>
<dbReference type="EMBL" id="CP000668">
    <property type="protein sequence ID" value="ABP41317.1"/>
    <property type="molecule type" value="Genomic_DNA"/>
</dbReference>
<dbReference type="RefSeq" id="WP_002209349.1">
    <property type="nucleotide sequence ID" value="NZ_CP009715.1"/>
</dbReference>
<dbReference type="SMR" id="A4TPV5"/>
<dbReference type="GeneID" id="57975308"/>
<dbReference type="KEGG" id="ypp:YPDSF_2955"/>
<dbReference type="PATRIC" id="fig|386656.14.peg.1410"/>
<dbReference type="UniPathway" id="UPA00028">
    <property type="reaction ID" value="UER00003"/>
</dbReference>
<dbReference type="GO" id="GO:0005737">
    <property type="term" value="C:cytoplasm"/>
    <property type="evidence" value="ECO:0007669"/>
    <property type="project" value="UniProtKB-SubCell"/>
</dbReference>
<dbReference type="GO" id="GO:0003864">
    <property type="term" value="F:3-methyl-2-oxobutanoate hydroxymethyltransferase activity"/>
    <property type="evidence" value="ECO:0007669"/>
    <property type="project" value="UniProtKB-UniRule"/>
</dbReference>
<dbReference type="GO" id="GO:0000287">
    <property type="term" value="F:magnesium ion binding"/>
    <property type="evidence" value="ECO:0007669"/>
    <property type="project" value="TreeGrafter"/>
</dbReference>
<dbReference type="GO" id="GO:0015940">
    <property type="term" value="P:pantothenate biosynthetic process"/>
    <property type="evidence" value="ECO:0007669"/>
    <property type="project" value="UniProtKB-UniRule"/>
</dbReference>
<dbReference type="CDD" id="cd06557">
    <property type="entry name" value="KPHMT-like"/>
    <property type="match status" value="1"/>
</dbReference>
<dbReference type="FunFam" id="3.20.20.60:FF:000003">
    <property type="entry name" value="3-methyl-2-oxobutanoate hydroxymethyltransferase"/>
    <property type="match status" value="1"/>
</dbReference>
<dbReference type="Gene3D" id="3.20.20.60">
    <property type="entry name" value="Phosphoenolpyruvate-binding domains"/>
    <property type="match status" value="1"/>
</dbReference>
<dbReference type="HAMAP" id="MF_00156">
    <property type="entry name" value="PanB"/>
    <property type="match status" value="1"/>
</dbReference>
<dbReference type="InterPro" id="IPR003700">
    <property type="entry name" value="Pantoate_hydroxy_MeTrfase"/>
</dbReference>
<dbReference type="InterPro" id="IPR015813">
    <property type="entry name" value="Pyrv/PenolPyrv_kinase-like_dom"/>
</dbReference>
<dbReference type="InterPro" id="IPR040442">
    <property type="entry name" value="Pyrv_kinase-like_dom_sf"/>
</dbReference>
<dbReference type="NCBIfam" id="TIGR00222">
    <property type="entry name" value="panB"/>
    <property type="match status" value="1"/>
</dbReference>
<dbReference type="NCBIfam" id="NF001452">
    <property type="entry name" value="PRK00311.1"/>
    <property type="match status" value="1"/>
</dbReference>
<dbReference type="PANTHER" id="PTHR20881">
    <property type="entry name" value="3-METHYL-2-OXOBUTANOATE HYDROXYMETHYLTRANSFERASE"/>
    <property type="match status" value="1"/>
</dbReference>
<dbReference type="PANTHER" id="PTHR20881:SF0">
    <property type="entry name" value="3-METHYL-2-OXOBUTANOATE HYDROXYMETHYLTRANSFERASE"/>
    <property type="match status" value="1"/>
</dbReference>
<dbReference type="Pfam" id="PF02548">
    <property type="entry name" value="Pantoate_transf"/>
    <property type="match status" value="1"/>
</dbReference>
<dbReference type="PIRSF" id="PIRSF000388">
    <property type="entry name" value="Pantoate_hydroxy_MeTrfase"/>
    <property type="match status" value="1"/>
</dbReference>
<dbReference type="SUPFAM" id="SSF51621">
    <property type="entry name" value="Phosphoenolpyruvate/pyruvate domain"/>
    <property type="match status" value="1"/>
</dbReference>
<accession>A4TPV5</accession>
<organism>
    <name type="scientific">Yersinia pestis (strain Pestoides F)</name>
    <dbReference type="NCBI Taxonomy" id="386656"/>
    <lineage>
        <taxon>Bacteria</taxon>
        <taxon>Pseudomonadati</taxon>
        <taxon>Pseudomonadota</taxon>
        <taxon>Gammaproteobacteria</taxon>
        <taxon>Enterobacterales</taxon>
        <taxon>Yersiniaceae</taxon>
        <taxon>Yersinia</taxon>
    </lineage>
</organism>
<sequence>MKTTTMSQLRQWKQEKRKFATLTAYDASFAQLFAEQGIQVLLVGDSLGMTLQGFDSTLPVTVADMAYHTRAVRRGAPHCLLLADMPFMSYATPELAFTHAAELMRAGANMVKLEGGSWLCDTIRMLAERAVPVCGHLGLTPQSVNIFGGYKVQGREEVAANQLLQDAIALEQAGAQLLVLECVPVELAQRVTEELTIPVIGIGAGNVTDGQILVMHDALGITGGHTPKFSKNFLAHSAGDIRAAIKLYIEEVEGGIYPAEEHTFQ</sequence>
<reference key="1">
    <citation type="submission" date="2007-02" db="EMBL/GenBank/DDBJ databases">
        <title>Complete sequence of chromosome of Yersinia pestis Pestoides F.</title>
        <authorList>
            <consortium name="US DOE Joint Genome Institute"/>
            <person name="Copeland A."/>
            <person name="Lucas S."/>
            <person name="Lapidus A."/>
            <person name="Barry K."/>
            <person name="Detter J.C."/>
            <person name="Glavina del Rio T."/>
            <person name="Hammon N."/>
            <person name="Israni S."/>
            <person name="Dalin E."/>
            <person name="Tice H."/>
            <person name="Pitluck S."/>
            <person name="Di Bartolo G."/>
            <person name="Chain P."/>
            <person name="Malfatti S."/>
            <person name="Shin M."/>
            <person name="Vergez L."/>
            <person name="Schmutz J."/>
            <person name="Larimer F."/>
            <person name="Land M."/>
            <person name="Hauser L."/>
            <person name="Worsham P."/>
            <person name="Chu M."/>
            <person name="Bearden S."/>
            <person name="Garcia E."/>
            <person name="Richardson P."/>
        </authorList>
    </citation>
    <scope>NUCLEOTIDE SEQUENCE [LARGE SCALE GENOMIC DNA]</scope>
    <source>
        <strain>Pestoides F</strain>
    </source>
</reference>
<protein>
    <recommendedName>
        <fullName evidence="1">3-methyl-2-oxobutanoate hydroxymethyltransferase</fullName>
        <ecNumber evidence="1">2.1.2.11</ecNumber>
    </recommendedName>
    <alternativeName>
        <fullName evidence="1">Ketopantoate hydroxymethyltransferase</fullName>
        <shortName evidence="1">KPHMT</shortName>
    </alternativeName>
</protein>